<reference key="1">
    <citation type="journal article" date="2004" name="Proc. Natl. Acad. Sci. U.S.A.">
        <title>Genomic plasticity of the causative agent of melioidosis, Burkholderia pseudomallei.</title>
        <authorList>
            <person name="Holden M.T.G."/>
            <person name="Titball R.W."/>
            <person name="Peacock S.J."/>
            <person name="Cerdeno-Tarraga A.-M."/>
            <person name="Atkins T."/>
            <person name="Crossman L.C."/>
            <person name="Pitt T."/>
            <person name="Churcher C."/>
            <person name="Mungall K.L."/>
            <person name="Bentley S.D."/>
            <person name="Sebaihia M."/>
            <person name="Thomson N.R."/>
            <person name="Bason N."/>
            <person name="Beacham I.R."/>
            <person name="Brooks K."/>
            <person name="Brown K.A."/>
            <person name="Brown N.F."/>
            <person name="Challis G.L."/>
            <person name="Cherevach I."/>
            <person name="Chillingworth T."/>
            <person name="Cronin A."/>
            <person name="Crossett B."/>
            <person name="Davis P."/>
            <person name="DeShazer D."/>
            <person name="Feltwell T."/>
            <person name="Fraser A."/>
            <person name="Hance Z."/>
            <person name="Hauser H."/>
            <person name="Holroyd S."/>
            <person name="Jagels K."/>
            <person name="Keith K.E."/>
            <person name="Maddison M."/>
            <person name="Moule S."/>
            <person name="Price C."/>
            <person name="Quail M.A."/>
            <person name="Rabbinowitsch E."/>
            <person name="Rutherford K."/>
            <person name="Sanders M."/>
            <person name="Simmonds M."/>
            <person name="Songsivilai S."/>
            <person name="Stevens K."/>
            <person name="Tumapa S."/>
            <person name="Vesaratchavest M."/>
            <person name="Whitehead S."/>
            <person name="Yeats C."/>
            <person name="Barrell B.G."/>
            <person name="Oyston P.C.F."/>
            <person name="Parkhill J."/>
        </authorList>
    </citation>
    <scope>NUCLEOTIDE SEQUENCE [LARGE SCALE GENOMIC DNA]</scope>
    <source>
        <strain>K96243</strain>
    </source>
</reference>
<protein>
    <recommendedName>
        <fullName evidence="1">Aminomethyltransferase</fullName>
        <ecNumber evidence="1">2.1.2.10</ecNumber>
    </recommendedName>
    <alternativeName>
        <fullName evidence="1">Glycine cleavage system T protein</fullName>
    </alternativeName>
</protein>
<keyword id="KW-0032">Aminotransferase</keyword>
<keyword id="KW-1185">Reference proteome</keyword>
<keyword id="KW-0808">Transferase</keyword>
<name>GCST_BURPS</name>
<organism>
    <name type="scientific">Burkholderia pseudomallei (strain K96243)</name>
    <dbReference type="NCBI Taxonomy" id="272560"/>
    <lineage>
        <taxon>Bacteria</taxon>
        <taxon>Pseudomonadati</taxon>
        <taxon>Pseudomonadota</taxon>
        <taxon>Betaproteobacteria</taxon>
        <taxon>Burkholderiales</taxon>
        <taxon>Burkholderiaceae</taxon>
        <taxon>Burkholderia</taxon>
        <taxon>pseudomallei group</taxon>
    </lineage>
</organism>
<accession>Q63PL4</accession>
<evidence type="ECO:0000255" key="1">
    <source>
        <dbReference type="HAMAP-Rule" id="MF_00259"/>
    </source>
</evidence>
<comment type="function">
    <text evidence="1">The glycine cleavage system catalyzes the degradation of glycine.</text>
</comment>
<comment type="catalytic activity">
    <reaction evidence="1">
        <text>N(6)-[(R)-S(8)-aminomethyldihydrolipoyl]-L-lysyl-[protein] + (6S)-5,6,7,8-tetrahydrofolate = N(6)-[(R)-dihydrolipoyl]-L-lysyl-[protein] + (6R)-5,10-methylene-5,6,7,8-tetrahydrofolate + NH4(+)</text>
        <dbReference type="Rhea" id="RHEA:16945"/>
        <dbReference type="Rhea" id="RHEA-COMP:10475"/>
        <dbReference type="Rhea" id="RHEA-COMP:10492"/>
        <dbReference type="ChEBI" id="CHEBI:15636"/>
        <dbReference type="ChEBI" id="CHEBI:28938"/>
        <dbReference type="ChEBI" id="CHEBI:57453"/>
        <dbReference type="ChEBI" id="CHEBI:83100"/>
        <dbReference type="ChEBI" id="CHEBI:83143"/>
        <dbReference type="EC" id="2.1.2.10"/>
    </reaction>
</comment>
<comment type="subunit">
    <text evidence="1">The glycine cleavage system is composed of four proteins: P, T, L and H.</text>
</comment>
<comment type="similarity">
    <text evidence="1">Belongs to the GcvT family.</text>
</comment>
<gene>
    <name evidence="1" type="primary">gcvT</name>
    <name type="ordered locus">BPSL3360</name>
</gene>
<feature type="chain" id="PRO_0000122550" description="Aminomethyltransferase">
    <location>
        <begin position="1"/>
        <end position="372"/>
    </location>
</feature>
<proteinExistence type="inferred from homology"/>
<dbReference type="EC" id="2.1.2.10" evidence="1"/>
<dbReference type="EMBL" id="BX571965">
    <property type="protein sequence ID" value="CAH37373.1"/>
    <property type="molecule type" value="Genomic_DNA"/>
</dbReference>
<dbReference type="RefSeq" id="WP_004202927.1">
    <property type="nucleotide sequence ID" value="NZ_CP009538.1"/>
</dbReference>
<dbReference type="RefSeq" id="YP_109955.1">
    <property type="nucleotide sequence ID" value="NC_006350.1"/>
</dbReference>
<dbReference type="SMR" id="Q63PL4"/>
<dbReference type="STRING" id="272560.BPSL3360"/>
<dbReference type="GeneID" id="93061983"/>
<dbReference type="KEGG" id="bps:BPSL3360"/>
<dbReference type="PATRIC" id="fig|272560.51.peg.1840"/>
<dbReference type="eggNOG" id="COG0404">
    <property type="taxonomic scope" value="Bacteria"/>
</dbReference>
<dbReference type="Proteomes" id="UP000000605">
    <property type="component" value="Chromosome 1"/>
</dbReference>
<dbReference type="GO" id="GO:0005829">
    <property type="term" value="C:cytosol"/>
    <property type="evidence" value="ECO:0007669"/>
    <property type="project" value="TreeGrafter"/>
</dbReference>
<dbReference type="GO" id="GO:0005960">
    <property type="term" value="C:glycine cleavage complex"/>
    <property type="evidence" value="ECO:0007669"/>
    <property type="project" value="InterPro"/>
</dbReference>
<dbReference type="GO" id="GO:0004047">
    <property type="term" value="F:aminomethyltransferase activity"/>
    <property type="evidence" value="ECO:0007669"/>
    <property type="project" value="UniProtKB-UniRule"/>
</dbReference>
<dbReference type="GO" id="GO:0008483">
    <property type="term" value="F:transaminase activity"/>
    <property type="evidence" value="ECO:0007669"/>
    <property type="project" value="UniProtKB-KW"/>
</dbReference>
<dbReference type="GO" id="GO:0019464">
    <property type="term" value="P:glycine decarboxylation via glycine cleavage system"/>
    <property type="evidence" value="ECO:0007669"/>
    <property type="project" value="UniProtKB-UniRule"/>
</dbReference>
<dbReference type="FunFam" id="3.30.70.1400:FF:000001">
    <property type="entry name" value="Aminomethyltransferase"/>
    <property type="match status" value="1"/>
</dbReference>
<dbReference type="FunFam" id="4.10.1250.10:FF:000001">
    <property type="entry name" value="Aminomethyltransferase"/>
    <property type="match status" value="1"/>
</dbReference>
<dbReference type="Gene3D" id="2.40.30.110">
    <property type="entry name" value="Aminomethyltransferase beta-barrel domains"/>
    <property type="match status" value="1"/>
</dbReference>
<dbReference type="Gene3D" id="3.30.70.1400">
    <property type="entry name" value="Aminomethyltransferase beta-barrel domains"/>
    <property type="match status" value="1"/>
</dbReference>
<dbReference type="Gene3D" id="4.10.1250.10">
    <property type="entry name" value="Aminomethyltransferase fragment"/>
    <property type="match status" value="1"/>
</dbReference>
<dbReference type="Gene3D" id="3.30.1360.120">
    <property type="entry name" value="Probable tRNA modification gtpase trme, domain 1"/>
    <property type="match status" value="1"/>
</dbReference>
<dbReference type="HAMAP" id="MF_00259">
    <property type="entry name" value="GcvT"/>
    <property type="match status" value="1"/>
</dbReference>
<dbReference type="InterPro" id="IPR006223">
    <property type="entry name" value="GCS_T"/>
</dbReference>
<dbReference type="InterPro" id="IPR022903">
    <property type="entry name" value="GCS_T_bac"/>
</dbReference>
<dbReference type="InterPro" id="IPR013977">
    <property type="entry name" value="GCST_C"/>
</dbReference>
<dbReference type="InterPro" id="IPR006222">
    <property type="entry name" value="GCV_T_N"/>
</dbReference>
<dbReference type="InterPro" id="IPR028896">
    <property type="entry name" value="GcvT/YgfZ/DmdA"/>
</dbReference>
<dbReference type="InterPro" id="IPR029043">
    <property type="entry name" value="GcvT/YgfZ_C"/>
</dbReference>
<dbReference type="InterPro" id="IPR027266">
    <property type="entry name" value="TrmE/GcvT_dom1"/>
</dbReference>
<dbReference type="NCBIfam" id="TIGR00528">
    <property type="entry name" value="gcvT"/>
    <property type="match status" value="1"/>
</dbReference>
<dbReference type="NCBIfam" id="NF001567">
    <property type="entry name" value="PRK00389.1"/>
    <property type="match status" value="1"/>
</dbReference>
<dbReference type="PANTHER" id="PTHR43757">
    <property type="entry name" value="AMINOMETHYLTRANSFERASE"/>
    <property type="match status" value="1"/>
</dbReference>
<dbReference type="PANTHER" id="PTHR43757:SF2">
    <property type="entry name" value="AMINOMETHYLTRANSFERASE, MITOCHONDRIAL"/>
    <property type="match status" value="1"/>
</dbReference>
<dbReference type="Pfam" id="PF01571">
    <property type="entry name" value="GCV_T"/>
    <property type="match status" value="1"/>
</dbReference>
<dbReference type="Pfam" id="PF08669">
    <property type="entry name" value="GCV_T_C"/>
    <property type="match status" value="1"/>
</dbReference>
<dbReference type="PIRSF" id="PIRSF006487">
    <property type="entry name" value="GcvT"/>
    <property type="match status" value="1"/>
</dbReference>
<dbReference type="SUPFAM" id="SSF101790">
    <property type="entry name" value="Aminomethyltransferase beta-barrel domain"/>
    <property type="match status" value="1"/>
</dbReference>
<dbReference type="SUPFAM" id="SSF103025">
    <property type="entry name" value="Folate-binding domain"/>
    <property type="match status" value="1"/>
</dbReference>
<sequence>MTVLKTTPLHAAHRALNARMVDFGGWDMPVNYGSQIEEHQAVRTDAGMFDVSHMCVVDFTGPRVRAFFEHAIANNVAKLQTPGKALYSCLLNPQGGVIDDLIVYYFTEEFFRVVVNAGTAEKDIAWFNQLNEQGGFGLTIAPRRDFAIVAAQGPNARAKVWDTVPCARAATSELKPFNAAQVAGTPFGDLTVARTGYTGEDGFEIIVPATHVEALWNALAERGVRPCGLGARDTLRLEAGMNLYGQDMDESVSPLDAGLAWTVDLSAPRAFVGRDALEAHGSRAAFVGLILQKENGRAGGVLRAHQKVATPHGEGEITSGTFSPSMQESIAFARVPKDVAIGDTVHVQIRDKQLPARVVKLPFVRNGKVLAA</sequence>